<name>MUTL_HALSA</name>
<evidence type="ECO:0000255" key="1">
    <source>
        <dbReference type="HAMAP-Rule" id="MF_00149"/>
    </source>
</evidence>
<evidence type="ECO:0000256" key="2">
    <source>
        <dbReference type="SAM" id="MobiDB-lite"/>
    </source>
</evidence>
<keyword id="KW-0227">DNA damage</keyword>
<keyword id="KW-0234">DNA repair</keyword>
<keyword id="KW-1185">Reference proteome</keyword>
<organism>
    <name type="scientific">Halobacterium salinarum (strain ATCC 700922 / JCM 11081 / NRC-1)</name>
    <name type="common">Halobacterium halobium</name>
    <dbReference type="NCBI Taxonomy" id="64091"/>
    <lineage>
        <taxon>Archaea</taxon>
        <taxon>Methanobacteriati</taxon>
        <taxon>Methanobacteriota</taxon>
        <taxon>Stenosarchaea group</taxon>
        <taxon>Halobacteria</taxon>
        <taxon>Halobacteriales</taxon>
        <taxon>Halobacteriaceae</taxon>
        <taxon>Halobacterium</taxon>
        <taxon>Halobacterium salinarum NRC-34001</taxon>
    </lineage>
</organism>
<proteinExistence type="inferred from homology"/>
<comment type="function">
    <text evidence="1">This protein is involved in the repair of mismatches in DNA. It is required for dam-dependent methyl-directed DNA mismatch repair. May act as a 'molecular matchmaker', a protein that promotes the formation of a stable complex between two or more DNA-binding proteins in an ATP-dependent manner without itself being part of a final effector complex.</text>
</comment>
<comment type="similarity">
    <text evidence="1">Belongs to the DNA mismatch repair MutL/HexB family.</text>
</comment>
<sequence>MTDRIRALDDATVARIAAGEVVERPASVVKELVENSLDAGAASVDVSVDAGGTDRIVVADDGRGMTGDDLRMAVRQHTTSKLDDASGLDGVGTLGFRGEALYTIGSVAELTVTTRPRNAGDTGARITVDHGDAGSVAPAGHPAGTTVEVTDLFGETPARRKYLKRAATEFGHVNRAVTRYALANPDVAVSLTHDGREVFATTGTGDVQDAALAVYGREVAQSLRTVDADPAADSVERVHGYVSDPEVTRSTREYLATFVNGRAVTDAVLREAVLDGYGDQLAPDRYPFAVLFVDCEGVDANVHPRKLEVRFEDEAGVKAAVEAGVRDALLDAGLVRAGAPRGASKPGDAEISPEHSPTDRDAGAAGGGDAAGQSDGNGQRTAASGATSESPASAFETGGGDEAADSAASTDGTRERPGSGTESRTGRFDAPAENARLPTGAGGPEADDQDTTSERDSLPDLRVLGQLHDTYVVAEAGDGLVLVDQHAADERVHYERLQARVDGASQALVAPAELELTAGEAAVFEAALGGLRELGFDAELAGRTARVTAVPAVLADALDAELARDVLSSFLADADGTPVADAADAVLADLACSPAIKGNTSLAEGSVVALLDALDACENPYACPHGRPTIVEVDGDELAARFERDYPGHAGRRREDAGN</sequence>
<gene>
    <name evidence="1" type="primary">mutL</name>
    <name type="ordered locus">VNG_0159G</name>
</gene>
<accession>Q9HSM6</accession>
<protein>
    <recommendedName>
        <fullName evidence="1">DNA mismatch repair protein MutL</fullName>
    </recommendedName>
</protein>
<dbReference type="EMBL" id="AE004437">
    <property type="protein sequence ID" value="AAG18777.1"/>
    <property type="molecule type" value="Genomic_DNA"/>
</dbReference>
<dbReference type="PIR" id="E84176">
    <property type="entry name" value="E84176"/>
</dbReference>
<dbReference type="RefSeq" id="WP_010902072.1">
    <property type="nucleotide sequence ID" value="NC_002607.1"/>
</dbReference>
<dbReference type="SMR" id="Q9HSM6"/>
<dbReference type="STRING" id="64091.VNG_0159G"/>
<dbReference type="PaxDb" id="64091-VNG_0159G"/>
<dbReference type="GeneID" id="68693136"/>
<dbReference type="KEGG" id="hal:VNG_0159G"/>
<dbReference type="PATRIC" id="fig|64091.14.peg.113"/>
<dbReference type="HOGENOM" id="CLU_004131_4_1_2"/>
<dbReference type="InParanoid" id="Q9HSM6"/>
<dbReference type="OrthoDB" id="146201at2157"/>
<dbReference type="PhylomeDB" id="Q9HSM6"/>
<dbReference type="Proteomes" id="UP000000554">
    <property type="component" value="Chromosome"/>
</dbReference>
<dbReference type="GO" id="GO:0032300">
    <property type="term" value="C:mismatch repair complex"/>
    <property type="evidence" value="ECO:0000318"/>
    <property type="project" value="GO_Central"/>
</dbReference>
<dbReference type="GO" id="GO:0005524">
    <property type="term" value="F:ATP binding"/>
    <property type="evidence" value="ECO:0007669"/>
    <property type="project" value="InterPro"/>
</dbReference>
<dbReference type="GO" id="GO:0016887">
    <property type="term" value="F:ATP hydrolysis activity"/>
    <property type="evidence" value="ECO:0000318"/>
    <property type="project" value="GO_Central"/>
</dbReference>
<dbReference type="GO" id="GO:0140664">
    <property type="term" value="F:ATP-dependent DNA damage sensor activity"/>
    <property type="evidence" value="ECO:0007669"/>
    <property type="project" value="InterPro"/>
</dbReference>
<dbReference type="GO" id="GO:0030983">
    <property type="term" value="F:mismatched DNA binding"/>
    <property type="evidence" value="ECO:0007669"/>
    <property type="project" value="InterPro"/>
</dbReference>
<dbReference type="GO" id="GO:0006298">
    <property type="term" value="P:mismatch repair"/>
    <property type="evidence" value="ECO:0000318"/>
    <property type="project" value="GO_Central"/>
</dbReference>
<dbReference type="CDD" id="cd16926">
    <property type="entry name" value="HATPase_MutL-MLH-PMS-like"/>
    <property type="match status" value="1"/>
</dbReference>
<dbReference type="CDD" id="cd00782">
    <property type="entry name" value="MutL_Trans"/>
    <property type="match status" value="1"/>
</dbReference>
<dbReference type="FunFam" id="3.30.565.10:FF:000003">
    <property type="entry name" value="DNA mismatch repair endonuclease MutL"/>
    <property type="match status" value="1"/>
</dbReference>
<dbReference type="Gene3D" id="3.30.230.10">
    <property type="match status" value="1"/>
</dbReference>
<dbReference type="Gene3D" id="3.30.565.10">
    <property type="entry name" value="Histidine kinase-like ATPase, C-terminal domain"/>
    <property type="match status" value="1"/>
</dbReference>
<dbReference type="Gene3D" id="3.30.1540.20">
    <property type="entry name" value="MutL, C-terminal domain, dimerisation subdomain"/>
    <property type="match status" value="1"/>
</dbReference>
<dbReference type="Gene3D" id="3.30.1370.100">
    <property type="entry name" value="MutL, C-terminal domain, regulatory subdomain"/>
    <property type="match status" value="1"/>
</dbReference>
<dbReference type="HAMAP" id="MF_00149">
    <property type="entry name" value="DNA_mis_repair"/>
    <property type="match status" value="1"/>
</dbReference>
<dbReference type="InterPro" id="IPR014762">
    <property type="entry name" value="DNA_mismatch_repair_CS"/>
</dbReference>
<dbReference type="InterPro" id="IPR020667">
    <property type="entry name" value="DNA_mismatch_repair_MutL"/>
</dbReference>
<dbReference type="InterPro" id="IPR013507">
    <property type="entry name" value="DNA_mismatch_S5_2-like"/>
</dbReference>
<dbReference type="InterPro" id="IPR036890">
    <property type="entry name" value="HATPase_C_sf"/>
</dbReference>
<dbReference type="InterPro" id="IPR002099">
    <property type="entry name" value="MutL/Mlh/PMS"/>
</dbReference>
<dbReference type="InterPro" id="IPR038973">
    <property type="entry name" value="MutL/Mlh/Pms-like"/>
</dbReference>
<dbReference type="InterPro" id="IPR014790">
    <property type="entry name" value="MutL_C"/>
</dbReference>
<dbReference type="InterPro" id="IPR042120">
    <property type="entry name" value="MutL_C_dimsub"/>
</dbReference>
<dbReference type="InterPro" id="IPR042121">
    <property type="entry name" value="MutL_C_regsub"/>
</dbReference>
<dbReference type="InterPro" id="IPR037198">
    <property type="entry name" value="MutL_C_sf"/>
</dbReference>
<dbReference type="InterPro" id="IPR020568">
    <property type="entry name" value="Ribosomal_Su5_D2-typ_SF"/>
</dbReference>
<dbReference type="InterPro" id="IPR014721">
    <property type="entry name" value="Ribsml_uS5_D2-typ_fold_subgr"/>
</dbReference>
<dbReference type="NCBIfam" id="TIGR00585">
    <property type="entry name" value="mutl"/>
    <property type="match status" value="1"/>
</dbReference>
<dbReference type="PANTHER" id="PTHR10073">
    <property type="entry name" value="DNA MISMATCH REPAIR PROTEIN MLH, PMS, MUTL"/>
    <property type="match status" value="1"/>
</dbReference>
<dbReference type="PANTHER" id="PTHR10073:SF12">
    <property type="entry name" value="DNA MISMATCH REPAIR PROTEIN MLH1"/>
    <property type="match status" value="1"/>
</dbReference>
<dbReference type="Pfam" id="PF01119">
    <property type="entry name" value="DNA_mis_repair"/>
    <property type="match status" value="1"/>
</dbReference>
<dbReference type="Pfam" id="PF13589">
    <property type="entry name" value="HATPase_c_3"/>
    <property type="match status" value="1"/>
</dbReference>
<dbReference type="Pfam" id="PF08676">
    <property type="entry name" value="MutL_C"/>
    <property type="match status" value="1"/>
</dbReference>
<dbReference type="SMART" id="SM01340">
    <property type="entry name" value="DNA_mis_repair"/>
    <property type="match status" value="1"/>
</dbReference>
<dbReference type="SMART" id="SM00853">
    <property type="entry name" value="MutL_C"/>
    <property type="match status" value="1"/>
</dbReference>
<dbReference type="SUPFAM" id="SSF55874">
    <property type="entry name" value="ATPase domain of HSP90 chaperone/DNA topoisomerase II/histidine kinase"/>
    <property type="match status" value="1"/>
</dbReference>
<dbReference type="SUPFAM" id="SSF118116">
    <property type="entry name" value="DNA mismatch repair protein MutL"/>
    <property type="match status" value="1"/>
</dbReference>
<dbReference type="SUPFAM" id="SSF54211">
    <property type="entry name" value="Ribosomal protein S5 domain 2-like"/>
    <property type="match status" value="1"/>
</dbReference>
<dbReference type="PROSITE" id="PS00058">
    <property type="entry name" value="DNA_MISMATCH_REPAIR_1"/>
    <property type="match status" value="1"/>
</dbReference>
<reference key="1">
    <citation type="journal article" date="2000" name="Proc. Natl. Acad. Sci. U.S.A.">
        <title>Genome sequence of Halobacterium species NRC-1.</title>
        <authorList>
            <person name="Ng W.V."/>
            <person name="Kennedy S.P."/>
            <person name="Mahairas G.G."/>
            <person name="Berquist B."/>
            <person name="Pan M."/>
            <person name="Shukla H.D."/>
            <person name="Lasky S.R."/>
            <person name="Baliga N.S."/>
            <person name="Thorsson V."/>
            <person name="Sbrogna J."/>
            <person name="Swartzell S."/>
            <person name="Weir D."/>
            <person name="Hall J."/>
            <person name="Dahl T.A."/>
            <person name="Welti R."/>
            <person name="Goo Y.A."/>
            <person name="Leithauser B."/>
            <person name="Keller K."/>
            <person name="Cruz R."/>
            <person name="Danson M.J."/>
            <person name="Hough D.W."/>
            <person name="Maddocks D.G."/>
            <person name="Jablonski P.E."/>
            <person name="Krebs M.P."/>
            <person name="Angevine C.M."/>
            <person name="Dale H."/>
            <person name="Isenbarger T.A."/>
            <person name="Peck R.F."/>
            <person name="Pohlschroder M."/>
            <person name="Spudich J.L."/>
            <person name="Jung K.-H."/>
            <person name="Alam M."/>
            <person name="Freitas T."/>
            <person name="Hou S."/>
            <person name="Daniels C.J."/>
            <person name="Dennis P.P."/>
            <person name="Omer A.D."/>
            <person name="Ebhardt H."/>
            <person name="Lowe T.M."/>
            <person name="Liang P."/>
            <person name="Riley M."/>
            <person name="Hood L."/>
            <person name="DasSarma S."/>
        </authorList>
    </citation>
    <scope>NUCLEOTIDE SEQUENCE [LARGE SCALE GENOMIC DNA]</scope>
    <source>
        <strain>ATCC 700922 / JCM 11081 / NRC-1</strain>
    </source>
</reference>
<feature type="chain" id="PRO_0000177999" description="DNA mismatch repair protein MutL">
    <location>
        <begin position="1"/>
        <end position="659"/>
    </location>
</feature>
<feature type="region of interest" description="Disordered" evidence="2">
    <location>
        <begin position="338"/>
        <end position="459"/>
    </location>
</feature>
<feature type="compositionally biased region" description="Basic and acidic residues" evidence="2">
    <location>
        <begin position="352"/>
        <end position="362"/>
    </location>
</feature>
<feature type="compositionally biased region" description="Polar residues" evidence="2">
    <location>
        <begin position="374"/>
        <end position="391"/>
    </location>
</feature>